<comment type="function">
    <text evidence="1">One of the primary rRNA binding proteins, it binds specifically to the 5'-end of 16S ribosomal RNA.</text>
</comment>
<comment type="subunit">
    <text evidence="1">Part of the 30S ribosomal subunit.</text>
</comment>
<comment type="similarity">
    <text evidence="1">Belongs to the universal ribosomal protein uS17 family.</text>
</comment>
<feature type="chain" id="PRO_1000054977" description="Small ribosomal subunit protein uS17">
    <location>
        <begin position="1"/>
        <end position="88"/>
    </location>
</feature>
<reference key="1">
    <citation type="journal article" date="2011" name="Appl. Environ. Microbiol.">
        <title>Genomic potential of Marinobacter aquaeolei, a biogeochemical 'opportunitroph'.</title>
        <authorList>
            <person name="Singer E."/>
            <person name="Webb E.A."/>
            <person name="Nelson W.C."/>
            <person name="Heidelberg J.F."/>
            <person name="Ivanova N."/>
            <person name="Pati A."/>
            <person name="Edwards K.J."/>
        </authorList>
    </citation>
    <scope>NUCLEOTIDE SEQUENCE [LARGE SCALE GENOMIC DNA]</scope>
    <source>
        <strain>ATCC 700491 / DSM 11845 / VT8</strain>
    </source>
</reference>
<evidence type="ECO:0000255" key="1">
    <source>
        <dbReference type="HAMAP-Rule" id="MF_01345"/>
    </source>
</evidence>
<evidence type="ECO:0000305" key="2"/>
<keyword id="KW-0687">Ribonucleoprotein</keyword>
<keyword id="KW-0689">Ribosomal protein</keyword>
<keyword id="KW-0694">RNA-binding</keyword>
<keyword id="KW-0699">rRNA-binding</keyword>
<dbReference type="EMBL" id="CP000514">
    <property type="protein sequence ID" value="ABM17825.1"/>
    <property type="molecule type" value="Genomic_DNA"/>
</dbReference>
<dbReference type="RefSeq" id="WP_011784251.1">
    <property type="nucleotide sequence ID" value="NC_008740.1"/>
</dbReference>
<dbReference type="SMR" id="A1TYK6"/>
<dbReference type="STRING" id="351348.Maqu_0728"/>
<dbReference type="KEGG" id="maq:Maqu_0728"/>
<dbReference type="eggNOG" id="COG0186">
    <property type="taxonomic scope" value="Bacteria"/>
</dbReference>
<dbReference type="HOGENOM" id="CLU_073626_1_1_6"/>
<dbReference type="OrthoDB" id="9811714at2"/>
<dbReference type="Proteomes" id="UP000000998">
    <property type="component" value="Chromosome"/>
</dbReference>
<dbReference type="GO" id="GO:0022627">
    <property type="term" value="C:cytosolic small ribosomal subunit"/>
    <property type="evidence" value="ECO:0007669"/>
    <property type="project" value="TreeGrafter"/>
</dbReference>
<dbReference type="GO" id="GO:0019843">
    <property type="term" value="F:rRNA binding"/>
    <property type="evidence" value="ECO:0007669"/>
    <property type="project" value="UniProtKB-UniRule"/>
</dbReference>
<dbReference type="GO" id="GO:0003735">
    <property type="term" value="F:structural constituent of ribosome"/>
    <property type="evidence" value="ECO:0007669"/>
    <property type="project" value="InterPro"/>
</dbReference>
<dbReference type="GO" id="GO:0006412">
    <property type="term" value="P:translation"/>
    <property type="evidence" value="ECO:0007669"/>
    <property type="project" value="UniProtKB-UniRule"/>
</dbReference>
<dbReference type="CDD" id="cd00364">
    <property type="entry name" value="Ribosomal_uS17"/>
    <property type="match status" value="1"/>
</dbReference>
<dbReference type="FunFam" id="2.40.50.140:FF:000014">
    <property type="entry name" value="30S ribosomal protein S17"/>
    <property type="match status" value="1"/>
</dbReference>
<dbReference type="Gene3D" id="2.40.50.140">
    <property type="entry name" value="Nucleic acid-binding proteins"/>
    <property type="match status" value="1"/>
</dbReference>
<dbReference type="HAMAP" id="MF_01345_B">
    <property type="entry name" value="Ribosomal_uS17_B"/>
    <property type="match status" value="1"/>
</dbReference>
<dbReference type="InterPro" id="IPR012340">
    <property type="entry name" value="NA-bd_OB-fold"/>
</dbReference>
<dbReference type="InterPro" id="IPR000266">
    <property type="entry name" value="Ribosomal_uS17"/>
</dbReference>
<dbReference type="InterPro" id="IPR019984">
    <property type="entry name" value="Ribosomal_uS17_bact/chlr"/>
</dbReference>
<dbReference type="InterPro" id="IPR019979">
    <property type="entry name" value="Ribosomal_uS17_CS"/>
</dbReference>
<dbReference type="NCBIfam" id="NF004123">
    <property type="entry name" value="PRK05610.1"/>
    <property type="match status" value="1"/>
</dbReference>
<dbReference type="NCBIfam" id="TIGR03635">
    <property type="entry name" value="uS17_bact"/>
    <property type="match status" value="1"/>
</dbReference>
<dbReference type="PANTHER" id="PTHR10744">
    <property type="entry name" value="40S RIBOSOMAL PROTEIN S11 FAMILY MEMBER"/>
    <property type="match status" value="1"/>
</dbReference>
<dbReference type="PANTHER" id="PTHR10744:SF1">
    <property type="entry name" value="SMALL RIBOSOMAL SUBUNIT PROTEIN US17M"/>
    <property type="match status" value="1"/>
</dbReference>
<dbReference type="Pfam" id="PF00366">
    <property type="entry name" value="Ribosomal_S17"/>
    <property type="match status" value="1"/>
</dbReference>
<dbReference type="PRINTS" id="PR00973">
    <property type="entry name" value="RIBOSOMALS17"/>
</dbReference>
<dbReference type="SUPFAM" id="SSF50249">
    <property type="entry name" value="Nucleic acid-binding proteins"/>
    <property type="match status" value="1"/>
</dbReference>
<dbReference type="PROSITE" id="PS00056">
    <property type="entry name" value="RIBOSOMAL_S17"/>
    <property type="match status" value="1"/>
</dbReference>
<organism>
    <name type="scientific">Marinobacter nauticus (strain ATCC 700491 / DSM 11845 / VT8)</name>
    <name type="common">Marinobacter aquaeolei</name>
    <dbReference type="NCBI Taxonomy" id="351348"/>
    <lineage>
        <taxon>Bacteria</taxon>
        <taxon>Pseudomonadati</taxon>
        <taxon>Pseudomonadota</taxon>
        <taxon>Gammaproteobacteria</taxon>
        <taxon>Pseudomonadales</taxon>
        <taxon>Marinobacteraceae</taxon>
        <taxon>Marinobacter</taxon>
    </lineage>
</organism>
<sequence>MTEATQTARTLSGKVVSNKMDKSIVVLVERQVKHPLYGKYMKRSTKIHAHDESNQCNIGDTVTIQETRPVSKTKSWALVEVTERAAKV</sequence>
<name>RS17_MARN8</name>
<protein>
    <recommendedName>
        <fullName evidence="1">Small ribosomal subunit protein uS17</fullName>
    </recommendedName>
    <alternativeName>
        <fullName evidence="2">30S ribosomal protein S17</fullName>
    </alternativeName>
</protein>
<gene>
    <name evidence="1" type="primary">rpsQ</name>
    <name type="ordered locus">Maqu_0728</name>
</gene>
<accession>A1TYK6</accession>
<proteinExistence type="inferred from homology"/>